<feature type="chain" id="PRO_0000264829" description="DNA repair protein RecO">
    <location>
        <begin position="1"/>
        <end position="249"/>
    </location>
</feature>
<reference key="1">
    <citation type="journal article" date="2008" name="Appl. Environ. Microbiol.">
        <title>The genome of Polaromonas sp. strain JS666: insights into the evolution of a hydrocarbon- and xenobiotic-degrading bacterium, and features of relevance to biotechnology.</title>
        <authorList>
            <person name="Mattes T.E."/>
            <person name="Alexander A.K."/>
            <person name="Richardson P.M."/>
            <person name="Munk A.C."/>
            <person name="Han C.S."/>
            <person name="Stothard P."/>
            <person name="Coleman N.V."/>
        </authorList>
    </citation>
    <scope>NUCLEOTIDE SEQUENCE [LARGE SCALE GENOMIC DNA]</scope>
    <source>
        <strain>JS666 / ATCC BAA-500</strain>
    </source>
</reference>
<dbReference type="EMBL" id="CP000316">
    <property type="protein sequence ID" value="ABE45537.1"/>
    <property type="molecule type" value="Genomic_DNA"/>
</dbReference>
<dbReference type="RefSeq" id="WP_011484529.1">
    <property type="nucleotide sequence ID" value="NC_007948.1"/>
</dbReference>
<dbReference type="SMR" id="Q126K5"/>
<dbReference type="STRING" id="296591.Bpro_3633"/>
<dbReference type="KEGG" id="pol:Bpro_3633"/>
<dbReference type="eggNOG" id="COG1381">
    <property type="taxonomic scope" value="Bacteria"/>
</dbReference>
<dbReference type="HOGENOM" id="CLU_066645_0_0_4"/>
<dbReference type="OrthoDB" id="9804792at2"/>
<dbReference type="Proteomes" id="UP000001983">
    <property type="component" value="Chromosome"/>
</dbReference>
<dbReference type="GO" id="GO:0043590">
    <property type="term" value="C:bacterial nucleoid"/>
    <property type="evidence" value="ECO:0007669"/>
    <property type="project" value="TreeGrafter"/>
</dbReference>
<dbReference type="GO" id="GO:0006310">
    <property type="term" value="P:DNA recombination"/>
    <property type="evidence" value="ECO:0007669"/>
    <property type="project" value="UniProtKB-UniRule"/>
</dbReference>
<dbReference type="GO" id="GO:0006302">
    <property type="term" value="P:double-strand break repair"/>
    <property type="evidence" value="ECO:0007669"/>
    <property type="project" value="TreeGrafter"/>
</dbReference>
<dbReference type="Gene3D" id="2.40.50.140">
    <property type="entry name" value="Nucleic acid-binding proteins"/>
    <property type="match status" value="1"/>
</dbReference>
<dbReference type="Gene3D" id="1.20.1440.120">
    <property type="entry name" value="Recombination protein O, C-terminal domain"/>
    <property type="match status" value="1"/>
</dbReference>
<dbReference type="HAMAP" id="MF_00201">
    <property type="entry name" value="RecO"/>
    <property type="match status" value="1"/>
</dbReference>
<dbReference type="InterPro" id="IPR037278">
    <property type="entry name" value="ARFGAP/RecO"/>
</dbReference>
<dbReference type="InterPro" id="IPR022572">
    <property type="entry name" value="DNA_rep/recomb_RecO_N"/>
</dbReference>
<dbReference type="InterPro" id="IPR012340">
    <property type="entry name" value="NA-bd_OB-fold"/>
</dbReference>
<dbReference type="InterPro" id="IPR003717">
    <property type="entry name" value="RecO"/>
</dbReference>
<dbReference type="InterPro" id="IPR042242">
    <property type="entry name" value="RecO_C"/>
</dbReference>
<dbReference type="NCBIfam" id="TIGR00613">
    <property type="entry name" value="reco"/>
    <property type="match status" value="1"/>
</dbReference>
<dbReference type="PANTHER" id="PTHR33991">
    <property type="entry name" value="DNA REPAIR PROTEIN RECO"/>
    <property type="match status" value="1"/>
</dbReference>
<dbReference type="PANTHER" id="PTHR33991:SF1">
    <property type="entry name" value="DNA REPAIR PROTEIN RECO"/>
    <property type="match status" value="1"/>
</dbReference>
<dbReference type="Pfam" id="PF02565">
    <property type="entry name" value="RecO_C"/>
    <property type="match status" value="1"/>
</dbReference>
<dbReference type="Pfam" id="PF11967">
    <property type="entry name" value="RecO_N"/>
    <property type="match status" value="1"/>
</dbReference>
<dbReference type="SUPFAM" id="SSF57863">
    <property type="entry name" value="ArfGap/RecO-like zinc finger"/>
    <property type="match status" value="1"/>
</dbReference>
<dbReference type="SUPFAM" id="SSF50249">
    <property type="entry name" value="Nucleic acid-binding proteins"/>
    <property type="match status" value="1"/>
</dbReference>
<evidence type="ECO:0000255" key="1">
    <source>
        <dbReference type="HAMAP-Rule" id="MF_00201"/>
    </source>
</evidence>
<gene>
    <name evidence="1" type="primary">recO</name>
    <name type="ordered locus">Bpro_3633</name>
</gene>
<keyword id="KW-0227">DNA damage</keyword>
<keyword id="KW-0233">DNA recombination</keyword>
<keyword id="KW-0234">DNA repair</keyword>
<keyword id="KW-1185">Reference proteome</keyword>
<proteinExistence type="inferred from homology"/>
<comment type="function">
    <text evidence="1">Involved in DNA repair and RecF pathway recombination.</text>
</comment>
<comment type="similarity">
    <text evidence="1">Belongs to the RecO family.</text>
</comment>
<protein>
    <recommendedName>
        <fullName evidence="1">DNA repair protein RecO</fullName>
    </recommendedName>
    <alternativeName>
        <fullName evidence="1">Recombination protein O</fullName>
    </alternativeName>
</protein>
<name>RECO_POLSJ</name>
<organism>
    <name type="scientific">Polaromonas sp. (strain JS666 / ATCC BAA-500)</name>
    <dbReference type="NCBI Taxonomy" id="296591"/>
    <lineage>
        <taxon>Bacteria</taxon>
        <taxon>Pseudomonadati</taxon>
        <taxon>Pseudomonadota</taxon>
        <taxon>Betaproteobacteria</taxon>
        <taxon>Burkholderiales</taxon>
        <taxon>Comamonadaceae</taxon>
        <taxon>Polaromonas</taxon>
    </lineage>
</organism>
<sequence>MATKRIGDEPAYVLHRYDWSESSLILEIFTRQYGRVALVARGAKKPSSSFRPILLPLQPLHIAFGGDAEIRTLKSAEWQGGHVMPTGDALLSGYYLNELLMRLLARDDPHPVLFDAYSATVQLLASQSVDTLQLALRAFELRLLRDIGLLPLLDAETATLAPLEPQARYVLVAEAGLRQAHDDDRNSLPGVQWQALQQALGDNALFSDTVRACIPGLNELKTQLRALLHYHCGVKVLKTRQMMMDLQAL</sequence>
<accession>Q126K5</accession>